<gene>
    <name evidence="1" type="primary">fusA</name>
    <name type="ordered locus">APH_1033</name>
</gene>
<reference key="1">
    <citation type="journal article" date="2006" name="PLoS Genet.">
        <title>Comparative genomics of emerging human ehrlichiosis agents.</title>
        <authorList>
            <person name="Dunning Hotopp J.C."/>
            <person name="Lin M."/>
            <person name="Madupu R."/>
            <person name="Crabtree J."/>
            <person name="Angiuoli S.V."/>
            <person name="Eisen J.A."/>
            <person name="Seshadri R."/>
            <person name="Ren Q."/>
            <person name="Wu M."/>
            <person name="Utterback T.R."/>
            <person name="Smith S."/>
            <person name="Lewis M."/>
            <person name="Khouri H."/>
            <person name="Zhang C."/>
            <person name="Niu H."/>
            <person name="Lin Q."/>
            <person name="Ohashi N."/>
            <person name="Zhi N."/>
            <person name="Nelson W.C."/>
            <person name="Brinkac L.M."/>
            <person name="Dodson R.J."/>
            <person name="Rosovitz M.J."/>
            <person name="Sundaram J.P."/>
            <person name="Daugherty S.C."/>
            <person name="Davidsen T."/>
            <person name="Durkin A.S."/>
            <person name="Gwinn M.L."/>
            <person name="Haft D.H."/>
            <person name="Selengut J.D."/>
            <person name="Sullivan S.A."/>
            <person name="Zafar N."/>
            <person name="Zhou L."/>
            <person name="Benahmed F."/>
            <person name="Forberger H."/>
            <person name="Halpin R."/>
            <person name="Mulligan S."/>
            <person name="Robinson J."/>
            <person name="White O."/>
            <person name="Rikihisa Y."/>
            <person name="Tettelin H."/>
        </authorList>
    </citation>
    <scope>NUCLEOTIDE SEQUENCE [LARGE SCALE GENOMIC DNA]</scope>
    <source>
        <strain>HZ</strain>
    </source>
</reference>
<feature type="chain" id="PRO_0000263425" description="Elongation factor G">
    <location>
        <begin position="1"/>
        <end position="690"/>
    </location>
</feature>
<feature type="domain" description="tr-type G">
    <location>
        <begin position="8"/>
        <end position="283"/>
    </location>
</feature>
<feature type="binding site" evidence="1">
    <location>
        <begin position="17"/>
        <end position="24"/>
    </location>
    <ligand>
        <name>GTP</name>
        <dbReference type="ChEBI" id="CHEBI:37565"/>
    </ligand>
</feature>
<feature type="binding site" evidence="1">
    <location>
        <begin position="81"/>
        <end position="85"/>
    </location>
    <ligand>
        <name>GTP</name>
        <dbReference type="ChEBI" id="CHEBI:37565"/>
    </ligand>
</feature>
<feature type="binding site" evidence="1">
    <location>
        <begin position="135"/>
        <end position="138"/>
    </location>
    <ligand>
        <name>GTP</name>
        <dbReference type="ChEBI" id="CHEBI:37565"/>
    </ligand>
</feature>
<dbReference type="EMBL" id="CP000235">
    <property type="protein sequence ID" value="ABD43280.1"/>
    <property type="molecule type" value="Genomic_DNA"/>
</dbReference>
<dbReference type="SMR" id="Q2GJ60"/>
<dbReference type="STRING" id="212042.APH_1033"/>
<dbReference type="PaxDb" id="212042-APH_1033"/>
<dbReference type="EnsemblBacteria" id="ABD43280">
    <property type="protein sequence ID" value="ABD43280"/>
    <property type="gene ID" value="APH_1033"/>
</dbReference>
<dbReference type="KEGG" id="aph:APH_1033"/>
<dbReference type="eggNOG" id="COG0480">
    <property type="taxonomic scope" value="Bacteria"/>
</dbReference>
<dbReference type="HOGENOM" id="CLU_002794_4_1_5"/>
<dbReference type="Proteomes" id="UP000001943">
    <property type="component" value="Chromosome"/>
</dbReference>
<dbReference type="GO" id="GO:0005737">
    <property type="term" value="C:cytoplasm"/>
    <property type="evidence" value="ECO:0007669"/>
    <property type="project" value="UniProtKB-SubCell"/>
</dbReference>
<dbReference type="GO" id="GO:0005525">
    <property type="term" value="F:GTP binding"/>
    <property type="evidence" value="ECO:0007669"/>
    <property type="project" value="UniProtKB-UniRule"/>
</dbReference>
<dbReference type="GO" id="GO:0003924">
    <property type="term" value="F:GTPase activity"/>
    <property type="evidence" value="ECO:0007669"/>
    <property type="project" value="InterPro"/>
</dbReference>
<dbReference type="GO" id="GO:0003746">
    <property type="term" value="F:translation elongation factor activity"/>
    <property type="evidence" value="ECO:0007669"/>
    <property type="project" value="UniProtKB-UniRule"/>
</dbReference>
<dbReference type="GO" id="GO:0032790">
    <property type="term" value="P:ribosome disassembly"/>
    <property type="evidence" value="ECO:0007669"/>
    <property type="project" value="TreeGrafter"/>
</dbReference>
<dbReference type="CDD" id="cd01886">
    <property type="entry name" value="EF-G"/>
    <property type="match status" value="1"/>
</dbReference>
<dbReference type="CDD" id="cd16262">
    <property type="entry name" value="EFG_III"/>
    <property type="match status" value="1"/>
</dbReference>
<dbReference type="CDD" id="cd01434">
    <property type="entry name" value="EFG_mtEFG1_IV"/>
    <property type="match status" value="1"/>
</dbReference>
<dbReference type="CDD" id="cd03713">
    <property type="entry name" value="EFG_mtEFG_C"/>
    <property type="match status" value="1"/>
</dbReference>
<dbReference type="CDD" id="cd04088">
    <property type="entry name" value="EFG_mtEFG_II"/>
    <property type="match status" value="1"/>
</dbReference>
<dbReference type="FunFam" id="2.40.30.10:FF:000006">
    <property type="entry name" value="Elongation factor G"/>
    <property type="match status" value="1"/>
</dbReference>
<dbReference type="FunFam" id="3.30.230.10:FF:000003">
    <property type="entry name" value="Elongation factor G"/>
    <property type="match status" value="1"/>
</dbReference>
<dbReference type="FunFam" id="3.30.70.240:FF:000001">
    <property type="entry name" value="Elongation factor G"/>
    <property type="match status" value="1"/>
</dbReference>
<dbReference type="FunFam" id="3.30.70.870:FF:000001">
    <property type="entry name" value="Elongation factor G"/>
    <property type="match status" value="1"/>
</dbReference>
<dbReference type="FunFam" id="3.40.50.300:FF:000029">
    <property type="entry name" value="Elongation factor G"/>
    <property type="match status" value="1"/>
</dbReference>
<dbReference type="Gene3D" id="3.30.230.10">
    <property type="match status" value="1"/>
</dbReference>
<dbReference type="Gene3D" id="3.30.70.240">
    <property type="match status" value="1"/>
</dbReference>
<dbReference type="Gene3D" id="3.30.70.870">
    <property type="entry name" value="Elongation Factor G (Translational Gtpase), domain 3"/>
    <property type="match status" value="1"/>
</dbReference>
<dbReference type="Gene3D" id="3.40.50.300">
    <property type="entry name" value="P-loop containing nucleotide triphosphate hydrolases"/>
    <property type="match status" value="1"/>
</dbReference>
<dbReference type="Gene3D" id="2.40.30.10">
    <property type="entry name" value="Translation factors"/>
    <property type="match status" value="1"/>
</dbReference>
<dbReference type="HAMAP" id="MF_00054_B">
    <property type="entry name" value="EF_G_EF_2_B"/>
    <property type="match status" value="1"/>
</dbReference>
<dbReference type="InterPro" id="IPR053905">
    <property type="entry name" value="EF-G-like_DII"/>
</dbReference>
<dbReference type="InterPro" id="IPR041095">
    <property type="entry name" value="EFG_II"/>
</dbReference>
<dbReference type="InterPro" id="IPR009022">
    <property type="entry name" value="EFG_III"/>
</dbReference>
<dbReference type="InterPro" id="IPR035647">
    <property type="entry name" value="EFG_III/V"/>
</dbReference>
<dbReference type="InterPro" id="IPR047872">
    <property type="entry name" value="EFG_IV"/>
</dbReference>
<dbReference type="InterPro" id="IPR035649">
    <property type="entry name" value="EFG_V"/>
</dbReference>
<dbReference type="InterPro" id="IPR000640">
    <property type="entry name" value="EFG_V-like"/>
</dbReference>
<dbReference type="InterPro" id="IPR031157">
    <property type="entry name" value="G_TR_CS"/>
</dbReference>
<dbReference type="InterPro" id="IPR027417">
    <property type="entry name" value="P-loop_NTPase"/>
</dbReference>
<dbReference type="InterPro" id="IPR020568">
    <property type="entry name" value="Ribosomal_Su5_D2-typ_SF"/>
</dbReference>
<dbReference type="InterPro" id="IPR014721">
    <property type="entry name" value="Ribsml_uS5_D2-typ_fold_subgr"/>
</dbReference>
<dbReference type="InterPro" id="IPR005225">
    <property type="entry name" value="Small_GTP-bd"/>
</dbReference>
<dbReference type="InterPro" id="IPR000795">
    <property type="entry name" value="T_Tr_GTP-bd_dom"/>
</dbReference>
<dbReference type="InterPro" id="IPR009000">
    <property type="entry name" value="Transl_B-barrel_sf"/>
</dbReference>
<dbReference type="InterPro" id="IPR004540">
    <property type="entry name" value="Transl_elong_EFG/EF2"/>
</dbReference>
<dbReference type="InterPro" id="IPR005517">
    <property type="entry name" value="Transl_elong_EFG/EF2_IV"/>
</dbReference>
<dbReference type="NCBIfam" id="TIGR00484">
    <property type="entry name" value="EF-G"/>
    <property type="match status" value="1"/>
</dbReference>
<dbReference type="NCBIfam" id="NF009381">
    <property type="entry name" value="PRK12740.1-5"/>
    <property type="match status" value="1"/>
</dbReference>
<dbReference type="NCBIfam" id="TIGR00231">
    <property type="entry name" value="small_GTP"/>
    <property type="match status" value="1"/>
</dbReference>
<dbReference type="PANTHER" id="PTHR43261:SF1">
    <property type="entry name" value="RIBOSOME-RELEASING FACTOR 2, MITOCHONDRIAL"/>
    <property type="match status" value="1"/>
</dbReference>
<dbReference type="PANTHER" id="PTHR43261">
    <property type="entry name" value="TRANSLATION ELONGATION FACTOR G-RELATED"/>
    <property type="match status" value="1"/>
</dbReference>
<dbReference type="Pfam" id="PF22042">
    <property type="entry name" value="EF-G_D2"/>
    <property type="match status" value="1"/>
</dbReference>
<dbReference type="Pfam" id="PF00679">
    <property type="entry name" value="EFG_C"/>
    <property type="match status" value="1"/>
</dbReference>
<dbReference type="Pfam" id="PF14492">
    <property type="entry name" value="EFG_III"/>
    <property type="match status" value="1"/>
</dbReference>
<dbReference type="Pfam" id="PF03764">
    <property type="entry name" value="EFG_IV"/>
    <property type="match status" value="1"/>
</dbReference>
<dbReference type="Pfam" id="PF00009">
    <property type="entry name" value="GTP_EFTU"/>
    <property type="match status" value="1"/>
</dbReference>
<dbReference type="PRINTS" id="PR00315">
    <property type="entry name" value="ELONGATNFCT"/>
</dbReference>
<dbReference type="SMART" id="SM00838">
    <property type="entry name" value="EFG_C"/>
    <property type="match status" value="1"/>
</dbReference>
<dbReference type="SMART" id="SM00889">
    <property type="entry name" value="EFG_IV"/>
    <property type="match status" value="1"/>
</dbReference>
<dbReference type="SUPFAM" id="SSF54980">
    <property type="entry name" value="EF-G C-terminal domain-like"/>
    <property type="match status" value="2"/>
</dbReference>
<dbReference type="SUPFAM" id="SSF52540">
    <property type="entry name" value="P-loop containing nucleoside triphosphate hydrolases"/>
    <property type="match status" value="1"/>
</dbReference>
<dbReference type="SUPFAM" id="SSF54211">
    <property type="entry name" value="Ribosomal protein S5 domain 2-like"/>
    <property type="match status" value="1"/>
</dbReference>
<dbReference type="SUPFAM" id="SSF50447">
    <property type="entry name" value="Translation proteins"/>
    <property type="match status" value="1"/>
</dbReference>
<dbReference type="PROSITE" id="PS00301">
    <property type="entry name" value="G_TR_1"/>
    <property type="match status" value="1"/>
</dbReference>
<dbReference type="PROSITE" id="PS51722">
    <property type="entry name" value="G_TR_2"/>
    <property type="match status" value="1"/>
</dbReference>
<protein>
    <recommendedName>
        <fullName evidence="1">Elongation factor G</fullName>
        <shortName evidence="1">EF-G</shortName>
    </recommendedName>
</protein>
<proteinExistence type="inferred from homology"/>
<name>EFG_ANAPZ</name>
<organism>
    <name type="scientific">Anaplasma phagocytophilum (strain HZ)</name>
    <dbReference type="NCBI Taxonomy" id="212042"/>
    <lineage>
        <taxon>Bacteria</taxon>
        <taxon>Pseudomonadati</taxon>
        <taxon>Pseudomonadota</taxon>
        <taxon>Alphaproteobacteria</taxon>
        <taxon>Rickettsiales</taxon>
        <taxon>Anaplasmataceae</taxon>
        <taxon>Anaplasma</taxon>
        <taxon>phagocytophilum group</taxon>
    </lineage>
</organism>
<evidence type="ECO:0000255" key="1">
    <source>
        <dbReference type="HAMAP-Rule" id="MF_00054"/>
    </source>
</evidence>
<accession>Q2GJ60</accession>
<keyword id="KW-0963">Cytoplasm</keyword>
<keyword id="KW-0251">Elongation factor</keyword>
<keyword id="KW-0342">GTP-binding</keyword>
<keyword id="KW-0547">Nucleotide-binding</keyword>
<keyword id="KW-0648">Protein biosynthesis</keyword>
<comment type="function">
    <text evidence="1">Catalyzes the GTP-dependent ribosomal translocation step during translation elongation. During this step, the ribosome changes from the pre-translocational (PRE) to the post-translocational (POST) state as the newly formed A-site-bound peptidyl-tRNA and P-site-bound deacylated tRNA move to the P and E sites, respectively. Catalyzes the coordinated movement of the two tRNA molecules, the mRNA and conformational changes in the ribosome.</text>
</comment>
<comment type="subcellular location">
    <subcellularLocation>
        <location evidence="1">Cytoplasm</location>
    </subcellularLocation>
</comment>
<comment type="similarity">
    <text evidence="1">Belongs to the TRAFAC class translation factor GTPase superfamily. Classic translation factor GTPase family. EF-G/EF-2 subfamily.</text>
</comment>
<sequence length="690" mass="75769">MSSKGDLSKCRNIGIMAHIDAGKTTTTERILFYTGKQNRIGEVHEGAASMDWMEQEKERGITITSAATTCFWNGCRINIIDTPGHVDFTVEVERSLRVLDGAVAVFDGVAGVEPQSETVWRQADRYDVPRICFVNKMDRVGADFYTCVDMIVDRLGAVPLVLQLPIGVDKGFVGVVDLVEMRSIIWEEDSLGAKFHYGDIPEGMLEEANKYRSKLVETAVEVDDEAMSMYLDGQDISVSLLKKCIRAGVIGSNFVPVLCGSAFKNKGVQPLLDAVVDYLPSPNDIPTIEGVSAKDPDQVMQITTSEDGKFVALAFKVMVDRFVGSLTFVRVYSGKLTGKSVVLNSSKGHTESVGRILLMHANNREDISEVKAGDIAALAGLKKTTTGDTLCDQNFPVILEKMDFPESVMELAIEPVSTADQEKMGMALSRLVAEDPSLKVFVNNESGQTILKGMGELHLEIIVDRMRREFGVEASVGAPQVAYRETITKAAEVEYIHKKQTGGAGQFAKVNILFEPLPPGSGFEFENKITCGAIPKEYIPGIQNGLELIKETGIIAGFPLIDFKATLFDGAFHEVDSSPLAFELAAKGAFREMASKAAPVLLEPIMRVEIITPDEYMGDVIGDINSRRGKVSEMQDRHNAKLITAFIPLSSMFGYVKDLRSMSQGRAQYSMFFARYERVPENVVVNDVKR</sequence>